<organism>
    <name type="scientific">Campylobacter fetus subsp. fetus (strain 82-40)</name>
    <dbReference type="NCBI Taxonomy" id="360106"/>
    <lineage>
        <taxon>Bacteria</taxon>
        <taxon>Pseudomonadati</taxon>
        <taxon>Campylobacterota</taxon>
        <taxon>Epsilonproteobacteria</taxon>
        <taxon>Campylobacterales</taxon>
        <taxon>Campylobacteraceae</taxon>
        <taxon>Campylobacter</taxon>
    </lineage>
</organism>
<keyword id="KW-0050">Antiport</keyword>
<keyword id="KW-0997">Cell inner membrane</keyword>
<keyword id="KW-1003">Cell membrane</keyword>
<keyword id="KW-0406">Ion transport</keyword>
<keyword id="KW-0472">Membrane</keyword>
<keyword id="KW-0915">Sodium</keyword>
<keyword id="KW-0739">Sodium transport</keyword>
<keyword id="KW-0812">Transmembrane</keyword>
<keyword id="KW-1133">Transmembrane helix</keyword>
<keyword id="KW-0813">Transport</keyword>
<name>NHAA1_CAMFF</name>
<gene>
    <name evidence="1" type="primary">nhaA1</name>
    <name type="ordered locus">CFF8240_0343</name>
</gene>
<reference key="1">
    <citation type="submission" date="2006-11" db="EMBL/GenBank/DDBJ databases">
        <title>Sequence of Campylobacter fetus subsp. fetus 82-40.</title>
        <authorList>
            <person name="Fouts D.E."/>
            <person name="Nelson K.E."/>
        </authorList>
    </citation>
    <scope>NUCLEOTIDE SEQUENCE [LARGE SCALE GENOMIC DNA]</scope>
    <source>
        <strain>82-40</strain>
    </source>
</reference>
<protein>
    <recommendedName>
        <fullName evidence="1">Na(+)/H(+) antiporter NhaA 1</fullName>
    </recommendedName>
    <alternativeName>
        <fullName evidence="1">Sodium/proton antiporter NhaA 1</fullName>
    </alternativeName>
</protein>
<feature type="chain" id="PRO_0000334251" description="Na(+)/H(+) antiporter NhaA 1">
    <location>
        <begin position="1"/>
        <end position="390"/>
    </location>
</feature>
<feature type="transmembrane region" description="Helical" evidence="1">
    <location>
        <begin position="14"/>
        <end position="34"/>
    </location>
</feature>
<feature type="transmembrane region" description="Helical" evidence="1">
    <location>
        <begin position="59"/>
        <end position="79"/>
    </location>
</feature>
<feature type="transmembrane region" description="Helical" evidence="1">
    <location>
        <begin position="94"/>
        <end position="114"/>
    </location>
</feature>
<feature type="transmembrane region" description="Helical" evidence="1">
    <location>
        <begin position="125"/>
        <end position="145"/>
    </location>
</feature>
<feature type="transmembrane region" description="Helical" evidence="1">
    <location>
        <begin position="154"/>
        <end position="174"/>
    </location>
</feature>
<feature type="transmembrane region" description="Helical" evidence="1">
    <location>
        <begin position="179"/>
        <end position="199"/>
    </location>
</feature>
<feature type="transmembrane region" description="Helical" evidence="1">
    <location>
        <begin position="205"/>
        <end position="225"/>
    </location>
</feature>
<feature type="transmembrane region" description="Helical" evidence="1">
    <location>
        <begin position="260"/>
        <end position="280"/>
    </location>
</feature>
<feature type="transmembrane region" description="Helical" evidence="1">
    <location>
        <begin position="295"/>
        <end position="315"/>
    </location>
</feature>
<feature type="transmembrane region" description="Helical" evidence="1">
    <location>
        <begin position="328"/>
        <end position="348"/>
    </location>
</feature>
<feature type="transmembrane region" description="Helical" evidence="1">
    <location>
        <begin position="362"/>
        <end position="382"/>
    </location>
</feature>
<comment type="function">
    <text evidence="1">Na(+)/H(+) antiporter that extrudes sodium in exchange for external protons.</text>
</comment>
<comment type="catalytic activity">
    <reaction evidence="1">
        <text>Na(+)(in) + 2 H(+)(out) = Na(+)(out) + 2 H(+)(in)</text>
        <dbReference type="Rhea" id="RHEA:29251"/>
        <dbReference type="ChEBI" id="CHEBI:15378"/>
        <dbReference type="ChEBI" id="CHEBI:29101"/>
    </reaction>
    <physiologicalReaction direction="left-to-right" evidence="1">
        <dbReference type="Rhea" id="RHEA:29252"/>
    </physiologicalReaction>
</comment>
<comment type="subcellular location">
    <subcellularLocation>
        <location evidence="1">Cell inner membrane</location>
        <topology evidence="1">Multi-pass membrane protein</topology>
    </subcellularLocation>
</comment>
<comment type="similarity">
    <text evidence="1">Belongs to the NhaA Na(+)/H(+) (TC 2.A.33) antiporter family.</text>
</comment>
<accession>A0RMW2</accession>
<proteinExistence type="inferred from homology"/>
<dbReference type="EMBL" id="CP000487">
    <property type="protein sequence ID" value="ABK82381.1"/>
    <property type="molecule type" value="Genomic_DNA"/>
</dbReference>
<dbReference type="SMR" id="A0RMW2"/>
<dbReference type="KEGG" id="cff:CFF8240_0343"/>
<dbReference type="eggNOG" id="COG3004">
    <property type="taxonomic scope" value="Bacteria"/>
</dbReference>
<dbReference type="HOGENOM" id="CLU_015803_1_0_7"/>
<dbReference type="Proteomes" id="UP000000760">
    <property type="component" value="Chromosome"/>
</dbReference>
<dbReference type="GO" id="GO:0005886">
    <property type="term" value="C:plasma membrane"/>
    <property type="evidence" value="ECO:0007669"/>
    <property type="project" value="UniProtKB-SubCell"/>
</dbReference>
<dbReference type="GO" id="GO:0015385">
    <property type="term" value="F:sodium:proton antiporter activity"/>
    <property type="evidence" value="ECO:0007669"/>
    <property type="project" value="TreeGrafter"/>
</dbReference>
<dbReference type="GO" id="GO:0006885">
    <property type="term" value="P:regulation of pH"/>
    <property type="evidence" value="ECO:0007669"/>
    <property type="project" value="InterPro"/>
</dbReference>
<dbReference type="Gene3D" id="1.20.1530.10">
    <property type="entry name" value="Na+/H+ antiporter like domain"/>
    <property type="match status" value="1"/>
</dbReference>
<dbReference type="HAMAP" id="MF_01844">
    <property type="entry name" value="NhaA"/>
    <property type="match status" value="1"/>
</dbReference>
<dbReference type="InterPro" id="IPR023171">
    <property type="entry name" value="Na/H_antiporter_dom_sf"/>
</dbReference>
<dbReference type="InterPro" id="IPR004670">
    <property type="entry name" value="NhaA"/>
</dbReference>
<dbReference type="NCBIfam" id="TIGR00773">
    <property type="entry name" value="NhaA"/>
    <property type="match status" value="1"/>
</dbReference>
<dbReference type="NCBIfam" id="NF007111">
    <property type="entry name" value="PRK09560.1"/>
    <property type="match status" value="1"/>
</dbReference>
<dbReference type="NCBIfam" id="NF007112">
    <property type="entry name" value="PRK09561.1"/>
    <property type="match status" value="1"/>
</dbReference>
<dbReference type="PANTHER" id="PTHR30341:SF0">
    <property type="entry name" value="NA(+)_H(+) ANTIPORTER NHAA"/>
    <property type="match status" value="1"/>
</dbReference>
<dbReference type="PANTHER" id="PTHR30341">
    <property type="entry name" value="SODIUM ION/PROTON ANTIPORTER NHAA-RELATED"/>
    <property type="match status" value="1"/>
</dbReference>
<dbReference type="Pfam" id="PF06965">
    <property type="entry name" value="Na_H_antiport_1"/>
    <property type="match status" value="1"/>
</dbReference>
<sequence>MNIIKNFLQKESASGILIILAMILALILANNGVLNKFYSEILRLDSGIIFGEFKLIKPTILWVNDGLMAIFFFFIGLELKYEFLEGELNSISKVALPSIAGIGGVIVPAVIFYVLNHANRFDVNGWAIPTVSDTAFALAVLFLLGSRIPISLKLFLLSLAIIDDVAAIIIIAIFYTKTLSIISLFISFCAIVILTILNYKNNQNIYIYLLCGIVLWVSVLMSGIHATLAGIIASMFIPLRDEDGDPEHGMLQSVMHFLHPIVAFLILPIFAFSNAGVVFSEDSILNLTHPVPLGIIFGLFIGKQIGVFSFAFLAIKCKLAELPNGCGWLHLYGLSILTGVGMSMSLFIDGLAYAESDAFLYANKIAILLASTMCAVTGYFVLRKASKSQN</sequence>
<evidence type="ECO:0000255" key="1">
    <source>
        <dbReference type="HAMAP-Rule" id="MF_01844"/>
    </source>
</evidence>